<reference key="1">
    <citation type="journal article" date="2005" name="PLoS Biol.">
        <title>Major structural differences and novel potential virulence mechanisms from the genomes of multiple Campylobacter species.</title>
        <authorList>
            <person name="Fouts D.E."/>
            <person name="Mongodin E.F."/>
            <person name="Mandrell R.E."/>
            <person name="Miller W.G."/>
            <person name="Rasko D.A."/>
            <person name="Ravel J."/>
            <person name="Brinkac L.M."/>
            <person name="DeBoy R.T."/>
            <person name="Parker C.T."/>
            <person name="Daugherty S.C."/>
            <person name="Dodson R.J."/>
            <person name="Durkin A.S."/>
            <person name="Madupu R."/>
            <person name="Sullivan S.A."/>
            <person name="Shetty J.U."/>
            <person name="Ayodeji M.A."/>
            <person name="Shvartsbeyn A."/>
            <person name="Schatz M.C."/>
            <person name="Badger J.H."/>
            <person name="Fraser C.M."/>
            <person name="Nelson K.E."/>
        </authorList>
    </citation>
    <scope>NUCLEOTIDE SEQUENCE [LARGE SCALE GENOMIC DNA]</scope>
    <source>
        <strain>RM1221</strain>
    </source>
</reference>
<sequence>MPTINQLVRKERKKVLEKSKSPALKNCPQRRGVCTRVYTTTPKKPNSALRKVAKVRLTSGFEVISYIGGEGHNLQEHSIVLVRGGRVKDLPGVKYHIVRGALDTAGVAKRTVSRSKYGAKRPKAGAAK</sequence>
<keyword id="KW-0488">Methylation</keyword>
<keyword id="KW-0687">Ribonucleoprotein</keyword>
<keyword id="KW-0689">Ribosomal protein</keyword>
<keyword id="KW-0694">RNA-binding</keyword>
<keyword id="KW-0699">rRNA-binding</keyword>
<keyword id="KW-0820">tRNA-binding</keyword>
<gene>
    <name evidence="2" type="primary">rpsL</name>
    <name type="ordered locus">CJE0540</name>
</gene>
<comment type="function">
    <text evidence="2">With S4 and S5 plays an important role in translational accuracy.</text>
</comment>
<comment type="function">
    <text evidence="2">Interacts with and stabilizes bases of the 16S rRNA that are involved in tRNA selection in the A site and with the mRNA backbone. Located at the interface of the 30S and 50S subunits, it traverses the body of the 30S subunit contacting proteins on the other side and probably holding the rRNA structure together. The combined cluster of proteins S8, S12 and S17 appears to hold together the shoulder and platform of the 30S subunit.</text>
</comment>
<comment type="subunit">
    <text evidence="2">Part of the 30S ribosomal subunit. Contacts proteins S8 and S17. May interact with IF1 in the 30S initiation complex.</text>
</comment>
<comment type="similarity">
    <text evidence="2">Belongs to the universal ribosomal protein uS12 family.</text>
</comment>
<name>RS12_CAMJR</name>
<evidence type="ECO:0000250" key="1"/>
<evidence type="ECO:0000255" key="2">
    <source>
        <dbReference type="HAMAP-Rule" id="MF_00403"/>
    </source>
</evidence>
<evidence type="ECO:0000305" key="3"/>
<feature type="chain" id="PRO_0000146198" description="Small ribosomal subunit protein uS12">
    <location>
        <begin position="1"/>
        <end position="128"/>
    </location>
</feature>
<feature type="modified residue" description="3-methylthioaspartic acid" evidence="1">
    <location>
        <position position="89"/>
    </location>
</feature>
<protein>
    <recommendedName>
        <fullName evidence="2">Small ribosomal subunit protein uS12</fullName>
    </recommendedName>
    <alternativeName>
        <fullName evidence="3">30S ribosomal protein S12</fullName>
    </alternativeName>
</protein>
<dbReference type="EMBL" id="CP000025">
    <property type="protein sequence ID" value="AAW35126.1"/>
    <property type="molecule type" value="Genomic_DNA"/>
</dbReference>
<dbReference type="RefSeq" id="WP_002782934.1">
    <property type="nucleotide sequence ID" value="NC_003912.7"/>
</dbReference>
<dbReference type="SMR" id="Q5HVX8"/>
<dbReference type="GeneID" id="98395216"/>
<dbReference type="KEGG" id="cjr:CJE0540"/>
<dbReference type="HOGENOM" id="CLU_104295_1_2_7"/>
<dbReference type="GO" id="GO:0015935">
    <property type="term" value="C:small ribosomal subunit"/>
    <property type="evidence" value="ECO:0007669"/>
    <property type="project" value="InterPro"/>
</dbReference>
<dbReference type="GO" id="GO:0019843">
    <property type="term" value="F:rRNA binding"/>
    <property type="evidence" value="ECO:0007669"/>
    <property type="project" value="UniProtKB-UniRule"/>
</dbReference>
<dbReference type="GO" id="GO:0003735">
    <property type="term" value="F:structural constituent of ribosome"/>
    <property type="evidence" value="ECO:0007669"/>
    <property type="project" value="InterPro"/>
</dbReference>
<dbReference type="GO" id="GO:0000049">
    <property type="term" value="F:tRNA binding"/>
    <property type="evidence" value="ECO:0007669"/>
    <property type="project" value="UniProtKB-UniRule"/>
</dbReference>
<dbReference type="GO" id="GO:0006412">
    <property type="term" value="P:translation"/>
    <property type="evidence" value="ECO:0007669"/>
    <property type="project" value="UniProtKB-UniRule"/>
</dbReference>
<dbReference type="CDD" id="cd03368">
    <property type="entry name" value="Ribosomal_S12"/>
    <property type="match status" value="1"/>
</dbReference>
<dbReference type="FunFam" id="2.40.50.140:FF:000001">
    <property type="entry name" value="30S ribosomal protein S12"/>
    <property type="match status" value="1"/>
</dbReference>
<dbReference type="Gene3D" id="2.40.50.140">
    <property type="entry name" value="Nucleic acid-binding proteins"/>
    <property type="match status" value="1"/>
</dbReference>
<dbReference type="HAMAP" id="MF_00403_B">
    <property type="entry name" value="Ribosomal_uS12_B"/>
    <property type="match status" value="1"/>
</dbReference>
<dbReference type="InterPro" id="IPR012340">
    <property type="entry name" value="NA-bd_OB-fold"/>
</dbReference>
<dbReference type="InterPro" id="IPR006032">
    <property type="entry name" value="Ribosomal_uS12"/>
</dbReference>
<dbReference type="InterPro" id="IPR005679">
    <property type="entry name" value="Ribosomal_uS12_bac"/>
</dbReference>
<dbReference type="NCBIfam" id="TIGR00981">
    <property type="entry name" value="rpsL_bact"/>
    <property type="match status" value="1"/>
</dbReference>
<dbReference type="PANTHER" id="PTHR11652">
    <property type="entry name" value="30S RIBOSOMAL PROTEIN S12 FAMILY MEMBER"/>
    <property type="match status" value="1"/>
</dbReference>
<dbReference type="Pfam" id="PF00164">
    <property type="entry name" value="Ribosom_S12_S23"/>
    <property type="match status" value="1"/>
</dbReference>
<dbReference type="PIRSF" id="PIRSF002133">
    <property type="entry name" value="Ribosomal_S12/S23"/>
    <property type="match status" value="1"/>
</dbReference>
<dbReference type="PRINTS" id="PR01034">
    <property type="entry name" value="RIBOSOMALS12"/>
</dbReference>
<dbReference type="SUPFAM" id="SSF50249">
    <property type="entry name" value="Nucleic acid-binding proteins"/>
    <property type="match status" value="1"/>
</dbReference>
<dbReference type="PROSITE" id="PS00055">
    <property type="entry name" value="RIBOSOMAL_S12"/>
    <property type="match status" value="1"/>
</dbReference>
<accession>Q5HVX8</accession>
<proteinExistence type="inferred from homology"/>
<organism>
    <name type="scientific">Campylobacter jejuni (strain RM1221)</name>
    <dbReference type="NCBI Taxonomy" id="195099"/>
    <lineage>
        <taxon>Bacteria</taxon>
        <taxon>Pseudomonadati</taxon>
        <taxon>Campylobacterota</taxon>
        <taxon>Epsilonproteobacteria</taxon>
        <taxon>Campylobacterales</taxon>
        <taxon>Campylobacteraceae</taxon>
        <taxon>Campylobacter</taxon>
    </lineage>
</organism>